<sequence>KDGYLVGNDGCKYSCLTRPGHYCASECSRVKGKDGYCYAWMACYCYNMPNWVKTWSRATNKCGKRK</sequence>
<proteinExistence type="evidence at protein level"/>
<reference key="1">
    <citation type="journal article" date="2018" name="Toxicon">
        <title>Venoms of Centruroides and Tityus species from Panama and their main toxic fractions.</title>
        <authorList>
            <person name="Salazar M.H."/>
            <person name="Arenas I."/>
            <person name="Corrales-Garcia L.L."/>
            <person name="Miranda R."/>
            <person name="Velez S."/>
            <person name="Sanchez J."/>
            <person name="Mendoza K."/>
            <person name="Cleghorn J."/>
            <person name="Zamudio F.Z."/>
            <person name="Castillo A."/>
            <person name="Possani L.D."/>
            <person name="Corzo G."/>
            <person name="Acosta H."/>
        </authorList>
    </citation>
    <scope>NUCLEOTIDE SEQUENCE [MRNA]</scope>
    <scope>PROBABLE AMIDATION AT CYS-62</scope>
    <source>
        <strain>Cocle area</strain>
        <tissue>Venom gland</tissue>
    </source>
</reference>
<reference evidence="7" key="2">
    <citation type="journal article" date="2022" name="Toxicon X">
        <title>Heterologous expression of four recombinant toxins from Panamanian scorpions of the genus Tityus and Centruroides for production of antivenom.</title>
        <authorList>
            <person name="Salazar M.H."/>
            <person name="Clement H."/>
            <person name="Corrales-Garcia L.L."/>
            <person name="Sanchez J."/>
            <person name="Cleghorn J."/>
            <person name="Zamudio F."/>
            <person name="Possani L.D."/>
            <person name="Acosta H."/>
            <person name="Corzo G."/>
        </authorList>
    </citation>
    <scope>NUCLEOTIDE SEQUENCE [MRNA]</scope>
    <scope>SUBCELLULAR LOCATION</scope>
    <scope>TISSUE SPECIFICITY</scope>
    <scope>MASS SPECTROMETRY</scope>
    <source>
        <tissue>Venom</tissue>
        <tissue evidence="6">Venom gland</tissue>
    </source>
</reference>
<keyword id="KW-0027">Amidation</keyword>
<keyword id="KW-1015">Disulfide bond</keyword>
<keyword id="KW-0872">Ion channel impairing toxin</keyword>
<keyword id="KW-0528">Neurotoxin</keyword>
<keyword id="KW-0964">Secreted</keyword>
<keyword id="KW-0800">Toxin</keyword>
<keyword id="KW-0738">Voltage-gated sodium channel impairing toxin</keyword>
<dbReference type="SMR" id="C0HLZ1"/>
<dbReference type="GO" id="GO:0005576">
    <property type="term" value="C:extracellular region"/>
    <property type="evidence" value="ECO:0000314"/>
    <property type="project" value="UniProtKB"/>
</dbReference>
<dbReference type="GO" id="GO:0019871">
    <property type="term" value="F:sodium channel inhibitor activity"/>
    <property type="evidence" value="ECO:0007669"/>
    <property type="project" value="InterPro"/>
</dbReference>
<dbReference type="GO" id="GO:0090729">
    <property type="term" value="F:toxin activity"/>
    <property type="evidence" value="ECO:0007669"/>
    <property type="project" value="UniProtKB-KW"/>
</dbReference>
<dbReference type="GO" id="GO:0006952">
    <property type="term" value="P:defense response"/>
    <property type="evidence" value="ECO:0007669"/>
    <property type="project" value="InterPro"/>
</dbReference>
<dbReference type="CDD" id="cd23106">
    <property type="entry name" value="neurotoxins_LC_scorpion"/>
    <property type="match status" value="1"/>
</dbReference>
<dbReference type="FunFam" id="3.30.30.10:FF:000002">
    <property type="entry name" value="Alpha-like toxin BmK-M1"/>
    <property type="match status" value="1"/>
</dbReference>
<dbReference type="Gene3D" id="3.30.30.10">
    <property type="entry name" value="Knottin, scorpion toxin-like"/>
    <property type="match status" value="1"/>
</dbReference>
<dbReference type="InterPro" id="IPR044062">
    <property type="entry name" value="LCN-type_CS_alpha_beta_dom"/>
</dbReference>
<dbReference type="InterPro" id="IPR003614">
    <property type="entry name" value="Scorpion_toxin-like"/>
</dbReference>
<dbReference type="InterPro" id="IPR036574">
    <property type="entry name" value="Scorpion_toxin-like_sf"/>
</dbReference>
<dbReference type="InterPro" id="IPR018218">
    <property type="entry name" value="Scorpion_toxinL"/>
</dbReference>
<dbReference type="InterPro" id="IPR002061">
    <property type="entry name" value="Scorpion_toxinL/defensin"/>
</dbReference>
<dbReference type="Pfam" id="PF00537">
    <property type="entry name" value="Toxin_3"/>
    <property type="match status" value="1"/>
</dbReference>
<dbReference type="PRINTS" id="PR00285">
    <property type="entry name" value="SCORPNTOXIN"/>
</dbReference>
<dbReference type="SMART" id="SM00505">
    <property type="entry name" value="Knot1"/>
    <property type="match status" value="1"/>
</dbReference>
<dbReference type="SUPFAM" id="SSF57095">
    <property type="entry name" value="Scorpion toxin-like"/>
    <property type="match status" value="1"/>
</dbReference>
<dbReference type="PROSITE" id="PS51863">
    <property type="entry name" value="LCN_CSAB"/>
    <property type="match status" value="1"/>
</dbReference>
<evidence type="ECO:0000250" key="1">
    <source>
        <dbReference type="UniProtKB" id="Q2NME3"/>
    </source>
</evidence>
<evidence type="ECO:0000255" key="2">
    <source>
        <dbReference type="PROSITE-ProRule" id="PRU01210"/>
    </source>
</evidence>
<evidence type="ECO:0000269" key="3">
    <source>
    </source>
</evidence>
<evidence type="ECO:0000269" key="4">
    <source>
    </source>
</evidence>
<evidence type="ECO:0000303" key="5">
    <source>
    </source>
</evidence>
<evidence type="ECO:0000303" key="6">
    <source>
    </source>
</evidence>
<evidence type="ECO:0000305" key="7"/>
<evidence type="ECO:0000305" key="8">
    <source>
    </source>
</evidence>
<evidence type="ECO:0000305" key="9">
    <source>
    </source>
</evidence>
<comment type="function">
    <text evidence="1">Beta toxins bind voltage-independently at site-4 of sodium channels (Nav) and shift the voltage of activation toward more negative potentials thereby affecting sodium channel activation and promoting spontaneous and repetitive firing.</text>
</comment>
<comment type="subcellular location">
    <subcellularLocation>
        <location evidence="3 4">Secreted</location>
    </subcellularLocation>
</comment>
<comment type="tissue specificity">
    <text evidence="8 9">Expressed by the venom gland.</text>
</comment>
<comment type="domain">
    <text evidence="7">Has the structural arrangement of an alpha-helix connected to antiparallel beta-sheets by disulfide bonds (CS-alpha/beta).</text>
</comment>
<comment type="mass spectrometry">
    <text>Average mass.</text>
</comment>
<comment type="similarity">
    <text evidence="7">Belongs to the long (4 C-C) scorpion toxin superfamily. Sodium channel inhibitor family. Beta subfamily.</text>
</comment>
<accession>C0HLZ1</accession>
<organism evidence="6">
    <name type="scientific">Tityus pachyurus</name>
    <name type="common">Colombian scorpion</name>
    <dbReference type="NCBI Taxonomy" id="288781"/>
    <lineage>
        <taxon>Eukaryota</taxon>
        <taxon>Metazoa</taxon>
        <taxon>Ecdysozoa</taxon>
        <taxon>Arthropoda</taxon>
        <taxon>Chelicerata</taxon>
        <taxon>Arachnida</taxon>
        <taxon>Scorpiones</taxon>
        <taxon>Buthida</taxon>
        <taxon>Buthoidea</taxon>
        <taxon>Buthidae</taxon>
        <taxon>Tityus</taxon>
    </lineage>
</organism>
<name>SCX10_TITPA</name>
<protein>
    <recommendedName>
        <fullName evidence="6">Toxin Tppa2</fullName>
    </recommendedName>
    <alternativeName>
        <fullName evidence="5">Toxin Cocle-A1</fullName>
    </alternativeName>
</protein>
<feature type="chain" id="PRO_0000456089" description="Toxin Tppa2">
    <location>
        <begin position="1"/>
        <end position="62"/>
    </location>
</feature>
<feature type="domain" description="LCN-type CS-alpha/beta" evidence="2">
    <location>
        <begin position="1"/>
        <end position="63"/>
    </location>
</feature>
<feature type="modified residue" description="Cysteine amide" evidence="8">
    <location>
        <position position="62"/>
    </location>
</feature>
<feature type="disulfide bond" evidence="2">
    <location>
        <begin position="11"/>
        <end position="62"/>
    </location>
</feature>
<feature type="disulfide bond" evidence="2">
    <location>
        <begin position="15"/>
        <end position="37"/>
    </location>
</feature>
<feature type="disulfide bond" evidence="2">
    <location>
        <begin position="23"/>
        <end position="43"/>
    </location>
</feature>
<feature type="disulfide bond" evidence="2">
    <location>
        <begin position="27"/>
        <end position="45"/>
    </location>
</feature>